<protein>
    <recommendedName>
        <fullName>Methyl sulfide methyltransferase-associated sensor</fullName>
        <ecNumber>2.7.13.3</ecNumber>
    </recommendedName>
</protein>
<evidence type="ECO:0000255" key="1">
    <source>
        <dbReference type="PROSITE-ProRule" id="PRU00107"/>
    </source>
</evidence>
<evidence type="ECO:0000255" key="2">
    <source>
        <dbReference type="PROSITE-ProRule" id="PRU00140"/>
    </source>
</evidence>
<evidence type="ECO:0000255" key="3">
    <source>
        <dbReference type="PROSITE-ProRule" id="PRU00141"/>
    </source>
</evidence>
<evidence type="ECO:0000269" key="4">
    <source>
    </source>
</evidence>
<evidence type="ECO:0000305" key="5">
    <source>
    </source>
</evidence>
<accession>Q8THF6</accession>
<sequence length="998" mass="113060">MIGVDMKLETLVNNGPAVIFLCRAETGWPVETVTANIVRFGYSPKDFISGGLGYADIIYPADLEIAVSQFFSYVEKDYIGKDLDYKVEYREYKGEAGEHKRNGKGNIGKDRGGYDSFTQQYRLLNKSGDVLWVEAEIKVLEEEEGKAGLFQVTVFDISRWKHTEKAMPAALDTENELKRIINSGHVIVFLWRAEPGWPVDFVSENISELGYTPEDFTSGRIVYTDIIHPDDLDNVRAEVSKNTEEGRDYFSKEYRVLAKSGEVRYVDERTLIRRNEKGEITCYQGILLDITQRKEAEELILSQNRVLERIASGASLDEVLLLLVNYAEEMKPGLLCTVMLLDREQKRLFYGACPSLPKLYSKAINGIQVQVNSETAGTAAGTGKRVIVGNIMKDPFCEECREIAQKVGLKACWAEPIFSSGGEVLGVFTIYLRETRKPREEELEFIRTNAYLAGIAIEHVQAADALKESENRFRTIFDNINDQLYIREPDGISYMDVNQVVVDRLGYSKEEILNMKAEEIIPSEYWASVRENMQKIKAEGSRIFEAGAVCKGGTVIPLEVSARIIDYGGKKTIFSVSRDITERKKAEVAQRLNGSRLEALVKLDQMAGASLKEITDFAREEAVRLTGSKLGYLAFMDAYESTLVMHSWSDSAMEECSIEDKQFVYPVKSMGLWGEAVRQRKPIITNDYPAPNPLKKGYPKNHVHLIRHLNIPVFDGKRIVAVAGVGNKEENYDESDVRQLTLLMQGMWQLIQRKQLEEALRTYSGELSRANEELRSVNMMKTEFVEEMMFPEKAEYGEIMDYETLYAIDSQQQKAVNTFIHYSEKLRRLVDSLLYQSLEKAGKIDYSFEETQLKDVLSDAFLNNVFLIGEKALEVKKEVSASLSEIKGDREKLTALFTALIDHAIKFTPQGGKLALEVKEEAGNVHIVIADSGKGISKELIPYLFDRLYQVNDSITRRYQGLESGLYICKNIVDAHKGEIWFESEEGLGNLMHVKLPK</sequence>
<name>MSMS_METAC</name>
<comment type="function">
    <text evidence="4">Heme-binding sensor kinase component part of a two-component regulatory system involved in methyl sulfide metabolism. Does not act as a phytochrome-like photoreceptor.</text>
</comment>
<comment type="catalytic activity">
    <reaction>
        <text>ATP + protein L-histidine = ADP + protein N-phospho-L-histidine.</text>
        <dbReference type="EC" id="2.7.13.3"/>
    </reaction>
</comment>
<comment type="cofactor">
    <cofactor evidence="4">
        <name>heme</name>
        <dbReference type="ChEBI" id="CHEBI:30413"/>
    </cofactor>
    <text evidence="4">Heme-binding is redox-active and coordinates various ligands such as imidazole, dimethyl sulfide, and carbon monoxide depending on the redox state. The redox state of the heme cofactor influences on autophosphorylation activity: while reduced protein does not autophosphorylate, oxidized protein promotes autophosphorylation signal.</text>
</comment>
<comment type="subcellular location">
    <subcellularLocation>
        <location evidence="5">Cytoplasm</location>
    </subcellularLocation>
</comment>
<comment type="PTM">
    <text>Autophosphorylates: autophosphorylation is dependent on the redox state of heme cofactor and is promoted upon reduction.</text>
</comment>
<comment type="disruption phenotype">
    <text evidence="4">Cells constitutively synthesize MtsF.</text>
</comment>
<reference key="1">
    <citation type="journal article" date="2002" name="Genome Res.">
        <title>The genome of Methanosarcina acetivorans reveals extensive metabolic and physiological diversity.</title>
        <authorList>
            <person name="Galagan J.E."/>
            <person name="Nusbaum C."/>
            <person name="Roy A."/>
            <person name="Endrizzi M.G."/>
            <person name="Macdonald P."/>
            <person name="FitzHugh W."/>
            <person name="Calvo S."/>
            <person name="Engels R."/>
            <person name="Smirnov S."/>
            <person name="Atnoor D."/>
            <person name="Brown A."/>
            <person name="Allen N."/>
            <person name="Naylor J."/>
            <person name="Stange-Thomann N."/>
            <person name="DeArellano K."/>
            <person name="Johnson R."/>
            <person name="Linton L."/>
            <person name="McEwan P."/>
            <person name="McKernan K."/>
            <person name="Talamas J."/>
            <person name="Tirrell A."/>
            <person name="Ye W."/>
            <person name="Zimmer A."/>
            <person name="Barber R.D."/>
            <person name="Cann I."/>
            <person name="Graham D.E."/>
            <person name="Grahame D.A."/>
            <person name="Guss A.M."/>
            <person name="Hedderich R."/>
            <person name="Ingram-Smith C."/>
            <person name="Kuettner H.C."/>
            <person name="Krzycki J.A."/>
            <person name="Leigh J.A."/>
            <person name="Li W."/>
            <person name="Liu J."/>
            <person name="Mukhopadhyay B."/>
            <person name="Reeve J.N."/>
            <person name="Smith K."/>
            <person name="Springer T.A."/>
            <person name="Umayam L.A."/>
            <person name="White O."/>
            <person name="White R.H."/>
            <person name="de Macario E.C."/>
            <person name="Ferry J.G."/>
            <person name="Jarrell K.F."/>
            <person name="Jing H."/>
            <person name="Macario A.J.L."/>
            <person name="Paulsen I.T."/>
            <person name="Pritchett M."/>
            <person name="Sowers K.R."/>
            <person name="Swanson R.V."/>
            <person name="Zinder S.H."/>
            <person name="Lander E."/>
            <person name="Metcalf W.W."/>
            <person name="Birren B."/>
        </authorList>
    </citation>
    <scope>NUCLEOTIDE SEQUENCE [LARGE SCALE GENOMIC DNA]</scope>
    <source>
        <strain>ATCC 35395 / DSM 2834 / JCM 12185 / C2A</strain>
    </source>
</reference>
<reference key="2">
    <citation type="journal article" date="2013" name="J. Biol. Chem.">
        <title>A heme-based redox sensor in the methanogenic archaeon Methanosarcina acetivorans.</title>
        <authorList>
            <person name="Molitor B."/>
            <person name="Stassen M."/>
            <person name="Modi A."/>
            <person name="El-Mashtoly S.F."/>
            <person name="Laurich C."/>
            <person name="Lubitz W."/>
            <person name="Dawson J.H."/>
            <person name="Rother M."/>
            <person name="Frankenberg-Dinkel N."/>
        </authorList>
    </citation>
    <scope>GENE NAME</scope>
    <scope>FUNCTION</scope>
    <scope>COFACTOR</scope>
    <scope>HEME-BINDING</scope>
    <scope>AUTOPHOSPHORYLATION</scope>
    <scope>MUTAGENESIS OF CYS-656</scope>
    <scope>DISRUPTION PHENOTYPE</scope>
    <scope>SUBCELLULAR LOCATION</scope>
    <source>
        <strain>ATCC 35395 / DSM 2834 / JCM 12185 / C2A</strain>
    </source>
</reference>
<feature type="chain" id="PRO_0000429051" description="Methyl sulfide methyltransferase-associated sensor">
    <location>
        <begin position="1"/>
        <end position="998"/>
    </location>
</feature>
<feature type="domain" description="PAS 1" evidence="2">
    <location>
        <begin position="40"/>
        <end position="77"/>
    </location>
</feature>
<feature type="domain" description="PAC 1" evidence="3">
    <location>
        <begin position="117"/>
        <end position="169"/>
    </location>
</feature>
<feature type="domain" description="PAS 2" evidence="2">
    <location>
        <begin position="209"/>
        <end position="246"/>
    </location>
</feature>
<feature type="domain" description="PAC 2" evidence="3">
    <location>
        <begin position="250"/>
        <end position="302"/>
    </location>
</feature>
<feature type="domain" description="GAF 1">
    <location>
        <begin position="314"/>
        <end position="458"/>
    </location>
</feature>
<feature type="domain" description="PAS 3" evidence="2">
    <location>
        <begin position="469"/>
        <end position="540"/>
    </location>
</feature>
<feature type="domain" description="GAF 2">
    <location>
        <begin position="609"/>
        <end position="752"/>
    </location>
</feature>
<feature type="domain" description="Histidine kinase" evidence="1">
    <location>
        <begin position="783"/>
        <end position="998"/>
    </location>
</feature>
<feature type="binding site" description="axial binding residue">
    <location>
        <position position="656"/>
    </location>
    <ligand>
        <name>heme</name>
        <dbReference type="ChEBI" id="CHEBI:30413"/>
    </ligand>
    <ligandPart>
        <name>Fe</name>
        <dbReference type="ChEBI" id="CHEBI:18248"/>
    </ligandPart>
</feature>
<feature type="mutagenesis site" description="Reversible conversion between Fe(2+) and Fe(3+) under different redox conditions protein kinase activity." evidence="4">
    <original>C</original>
    <variation>A</variation>
    <location>
        <position position="656"/>
    </location>
</feature>
<keyword id="KW-0963">Cytoplasm</keyword>
<keyword id="KW-0349">Heme</keyword>
<keyword id="KW-0408">Iron</keyword>
<keyword id="KW-0418">Kinase</keyword>
<keyword id="KW-0479">Metal-binding</keyword>
<keyword id="KW-0597">Phosphoprotein</keyword>
<keyword id="KW-1185">Reference proteome</keyword>
<keyword id="KW-0677">Repeat</keyword>
<keyword id="KW-0808">Transferase</keyword>
<keyword id="KW-0902">Two-component regulatory system</keyword>
<gene>
    <name type="primary">msmS</name>
    <name type="ordered locus">MA_4561</name>
</gene>
<organism>
    <name type="scientific">Methanosarcina acetivorans (strain ATCC 35395 / DSM 2834 / JCM 12185 / C2A)</name>
    <dbReference type="NCBI Taxonomy" id="188937"/>
    <lineage>
        <taxon>Archaea</taxon>
        <taxon>Methanobacteriati</taxon>
        <taxon>Methanobacteriota</taxon>
        <taxon>Stenosarchaea group</taxon>
        <taxon>Methanomicrobia</taxon>
        <taxon>Methanosarcinales</taxon>
        <taxon>Methanosarcinaceae</taxon>
        <taxon>Methanosarcina</taxon>
    </lineage>
</organism>
<dbReference type="EC" id="2.7.13.3"/>
<dbReference type="EMBL" id="AE010299">
    <property type="protein sequence ID" value="AAM07900.1"/>
    <property type="molecule type" value="Genomic_DNA"/>
</dbReference>
<dbReference type="RefSeq" id="WP_011024434.1">
    <property type="nucleotide sequence ID" value="NC_003552.1"/>
</dbReference>
<dbReference type="STRING" id="188937.MA_4561"/>
<dbReference type="EnsemblBacteria" id="AAM07900">
    <property type="protein sequence ID" value="AAM07900"/>
    <property type="gene ID" value="MA_4561"/>
</dbReference>
<dbReference type="GeneID" id="1476455"/>
<dbReference type="KEGG" id="mac:MA_4561"/>
<dbReference type="HOGENOM" id="CLU_339705_0_0_2"/>
<dbReference type="InParanoid" id="Q8THF6"/>
<dbReference type="PhylomeDB" id="Q8THF6"/>
<dbReference type="Proteomes" id="UP000002487">
    <property type="component" value="Chromosome"/>
</dbReference>
<dbReference type="GO" id="GO:0005737">
    <property type="term" value="C:cytoplasm"/>
    <property type="evidence" value="ECO:0007669"/>
    <property type="project" value="UniProtKB-SubCell"/>
</dbReference>
<dbReference type="GO" id="GO:0005886">
    <property type="term" value="C:plasma membrane"/>
    <property type="evidence" value="ECO:0000318"/>
    <property type="project" value="GO_Central"/>
</dbReference>
<dbReference type="GO" id="GO:0009927">
    <property type="term" value="F:histidine phosphotransfer kinase activity"/>
    <property type="evidence" value="ECO:0000318"/>
    <property type="project" value="GO_Central"/>
</dbReference>
<dbReference type="GO" id="GO:0046872">
    <property type="term" value="F:metal ion binding"/>
    <property type="evidence" value="ECO:0007669"/>
    <property type="project" value="UniProtKB-KW"/>
</dbReference>
<dbReference type="GO" id="GO:0000155">
    <property type="term" value="F:phosphorelay sensor kinase activity"/>
    <property type="evidence" value="ECO:0000318"/>
    <property type="project" value="GO_Central"/>
</dbReference>
<dbReference type="GO" id="GO:0000160">
    <property type="term" value="P:phosphorelay signal transduction system"/>
    <property type="evidence" value="ECO:0000318"/>
    <property type="project" value="GO_Central"/>
</dbReference>
<dbReference type="CDD" id="cd00130">
    <property type="entry name" value="PAS"/>
    <property type="match status" value="3"/>
</dbReference>
<dbReference type="FunFam" id="3.30.450.40:FF:000156">
    <property type="entry name" value="Sensory transduction histidine kinase"/>
    <property type="match status" value="1"/>
</dbReference>
<dbReference type="FunFam" id="3.30.565.10:FF:000217">
    <property type="entry name" value="Sensory transduction histidine kinase"/>
    <property type="match status" value="1"/>
</dbReference>
<dbReference type="Gene3D" id="3.30.450.40">
    <property type="match status" value="2"/>
</dbReference>
<dbReference type="Gene3D" id="3.30.565.10">
    <property type="entry name" value="Histidine kinase-like ATPase, C-terminal domain"/>
    <property type="match status" value="1"/>
</dbReference>
<dbReference type="Gene3D" id="3.30.450.20">
    <property type="entry name" value="PAS domain"/>
    <property type="match status" value="3"/>
</dbReference>
<dbReference type="InterPro" id="IPR003018">
    <property type="entry name" value="GAF"/>
</dbReference>
<dbReference type="InterPro" id="IPR029016">
    <property type="entry name" value="GAF-like_dom_sf"/>
</dbReference>
<dbReference type="InterPro" id="IPR036890">
    <property type="entry name" value="HATPase_C_sf"/>
</dbReference>
<dbReference type="InterPro" id="IPR005467">
    <property type="entry name" value="His_kinase_dom"/>
</dbReference>
<dbReference type="InterPro" id="IPR001610">
    <property type="entry name" value="PAC"/>
</dbReference>
<dbReference type="InterPro" id="IPR000014">
    <property type="entry name" value="PAS"/>
</dbReference>
<dbReference type="InterPro" id="IPR000700">
    <property type="entry name" value="PAS-assoc_C"/>
</dbReference>
<dbReference type="InterPro" id="IPR035965">
    <property type="entry name" value="PAS-like_dom_sf"/>
</dbReference>
<dbReference type="InterPro" id="IPR013655">
    <property type="entry name" value="PAS_fold_3"/>
</dbReference>
<dbReference type="InterPro" id="IPR052162">
    <property type="entry name" value="Sensor_kinase/Photoreceptor"/>
</dbReference>
<dbReference type="InterPro" id="IPR004358">
    <property type="entry name" value="Sig_transdc_His_kin-like_C"/>
</dbReference>
<dbReference type="NCBIfam" id="TIGR00229">
    <property type="entry name" value="sensory_box"/>
    <property type="match status" value="2"/>
</dbReference>
<dbReference type="PANTHER" id="PTHR43304:SF1">
    <property type="entry name" value="PAC DOMAIN-CONTAINING PROTEIN"/>
    <property type="match status" value="1"/>
</dbReference>
<dbReference type="PANTHER" id="PTHR43304">
    <property type="entry name" value="PHYTOCHROME-LIKE PROTEIN CPH1"/>
    <property type="match status" value="1"/>
</dbReference>
<dbReference type="Pfam" id="PF13185">
    <property type="entry name" value="GAF_2"/>
    <property type="match status" value="2"/>
</dbReference>
<dbReference type="Pfam" id="PF02518">
    <property type="entry name" value="HATPase_c"/>
    <property type="match status" value="1"/>
</dbReference>
<dbReference type="Pfam" id="PF08447">
    <property type="entry name" value="PAS_3"/>
    <property type="match status" value="2"/>
</dbReference>
<dbReference type="Pfam" id="PF13426">
    <property type="entry name" value="PAS_9"/>
    <property type="match status" value="1"/>
</dbReference>
<dbReference type="PRINTS" id="PR00344">
    <property type="entry name" value="BCTRLSENSOR"/>
</dbReference>
<dbReference type="SMART" id="SM00065">
    <property type="entry name" value="GAF"/>
    <property type="match status" value="2"/>
</dbReference>
<dbReference type="SMART" id="SM00387">
    <property type="entry name" value="HATPase_c"/>
    <property type="match status" value="1"/>
</dbReference>
<dbReference type="SMART" id="SM00086">
    <property type="entry name" value="PAC"/>
    <property type="match status" value="3"/>
</dbReference>
<dbReference type="SMART" id="SM00091">
    <property type="entry name" value="PAS"/>
    <property type="match status" value="3"/>
</dbReference>
<dbReference type="SUPFAM" id="SSF55874">
    <property type="entry name" value="ATPase domain of HSP90 chaperone/DNA topoisomerase II/histidine kinase"/>
    <property type="match status" value="1"/>
</dbReference>
<dbReference type="SUPFAM" id="SSF55781">
    <property type="entry name" value="GAF domain-like"/>
    <property type="match status" value="2"/>
</dbReference>
<dbReference type="SUPFAM" id="SSF55785">
    <property type="entry name" value="PYP-like sensor domain (PAS domain)"/>
    <property type="match status" value="3"/>
</dbReference>
<dbReference type="PROSITE" id="PS50109">
    <property type="entry name" value="HIS_KIN"/>
    <property type="match status" value="1"/>
</dbReference>
<dbReference type="PROSITE" id="PS50113">
    <property type="entry name" value="PAC"/>
    <property type="match status" value="2"/>
</dbReference>
<dbReference type="PROSITE" id="PS50112">
    <property type="entry name" value="PAS"/>
    <property type="match status" value="2"/>
</dbReference>
<proteinExistence type="evidence at protein level"/>